<dbReference type="EMBL" id="AC007260">
    <property type="protein sequence ID" value="AAD30572.1"/>
    <property type="molecule type" value="Genomic_DNA"/>
</dbReference>
<dbReference type="EMBL" id="CP002684">
    <property type="status" value="NOT_ANNOTATED_CDS"/>
    <property type="molecule type" value="Genomic_DNA"/>
</dbReference>
<dbReference type="PIR" id="B96815">
    <property type="entry name" value="B96815"/>
</dbReference>
<dbReference type="SMR" id="Q9SYL8"/>
<dbReference type="PaxDb" id="3702-AT1G78640.1"/>
<dbReference type="Araport" id="AT1G78640"/>
<dbReference type="TAIR" id="AT1G78640"/>
<dbReference type="HOGENOM" id="CLU_560633_0_0_1"/>
<dbReference type="InParanoid" id="Q9SYL8"/>
<dbReference type="PRO" id="PR:Q9SYL8"/>
<dbReference type="Proteomes" id="UP000006548">
    <property type="component" value="Chromosome 1"/>
</dbReference>
<dbReference type="ExpressionAtlas" id="Q9SYL8">
    <property type="expression patterns" value="baseline"/>
</dbReference>
<dbReference type="GO" id="GO:0005634">
    <property type="term" value="C:nucleus"/>
    <property type="evidence" value="ECO:0007669"/>
    <property type="project" value="UniProtKB-SubCell"/>
</dbReference>
<dbReference type="GO" id="GO:0003677">
    <property type="term" value="F:DNA binding"/>
    <property type="evidence" value="ECO:0007669"/>
    <property type="project" value="UniProtKB-KW"/>
</dbReference>
<dbReference type="CDD" id="cd10017">
    <property type="entry name" value="B3_DNA"/>
    <property type="match status" value="2"/>
</dbReference>
<dbReference type="Gene3D" id="2.40.330.10">
    <property type="entry name" value="DNA-binding pseudobarrel domain"/>
    <property type="match status" value="2"/>
</dbReference>
<dbReference type="InterPro" id="IPR003340">
    <property type="entry name" value="B3_DNA-bd"/>
</dbReference>
<dbReference type="InterPro" id="IPR051442">
    <property type="entry name" value="B3_domain"/>
</dbReference>
<dbReference type="InterPro" id="IPR015300">
    <property type="entry name" value="DNA-bd_pseudobarrel_sf"/>
</dbReference>
<dbReference type="PANTHER" id="PTHR34269:SF11">
    <property type="entry name" value="B3 DOMAIN PROTEIN"/>
    <property type="match status" value="1"/>
</dbReference>
<dbReference type="PANTHER" id="PTHR34269">
    <property type="entry name" value="TRANSCRIPTION FACTOR B3-DOMAIN FAMILY-RELATED"/>
    <property type="match status" value="1"/>
</dbReference>
<dbReference type="SUPFAM" id="SSF101936">
    <property type="entry name" value="DNA-binding pseudobarrel domain"/>
    <property type="match status" value="2"/>
</dbReference>
<gene>
    <name type="ordered locus">At1g78640</name>
    <name type="ORF">T30F21.3</name>
</gene>
<proteinExistence type="inferred from homology"/>
<evidence type="ECO:0000250" key="1"/>
<reference key="1">
    <citation type="journal article" date="2000" name="Nature">
        <title>Sequence and analysis of chromosome 1 of the plant Arabidopsis thaliana.</title>
        <authorList>
            <person name="Theologis A."/>
            <person name="Ecker J.R."/>
            <person name="Palm C.J."/>
            <person name="Federspiel N.A."/>
            <person name="Kaul S."/>
            <person name="White O."/>
            <person name="Alonso J."/>
            <person name="Altafi H."/>
            <person name="Araujo R."/>
            <person name="Bowman C.L."/>
            <person name="Brooks S.Y."/>
            <person name="Buehler E."/>
            <person name="Chan A."/>
            <person name="Chao Q."/>
            <person name="Chen H."/>
            <person name="Cheuk R.F."/>
            <person name="Chin C.W."/>
            <person name="Chung M.K."/>
            <person name="Conn L."/>
            <person name="Conway A.B."/>
            <person name="Conway A.R."/>
            <person name="Creasy T.H."/>
            <person name="Dewar K."/>
            <person name="Dunn P."/>
            <person name="Etgu P."/>
            <person name="Feldblyum T.V."/>
            <person name="Feng J.-D."/>
            <person name="Fong B."/>
            <person name="Fujii C.Y."/>
            <person name="Gill J.E."/>
            <person name="Goldsmith A.D."/>
            <person name="Haas B."/>
            <person name="Hansen N.F."/>
            <person name="Hughes B."/>
            <person name="Huizar L."/>
            <person name="Hunter J.L."/>
            <person name="Jenkins J."/>
            <person name="Johnson-Hopson C."/>
            <person name="Khan S."/>
            <person name="Khaykin E."/>
            <person name="Kim C.J."/>
            <person name="Koo H.L."/>
            <person name="Kremenetskaia I."/>
            <person name="Kurtz D.B."/>
            <person name="Kwan A."/>
            <person name="Lam B."/>
            <person name="Langin-Hooper S."/>
            <person name="Lee A."/>
            <person name="Lee J.M."/>
            <person name="Lenz C.A."/>
            <person name="Li J.H."/>
            <person name="Li Y.-P."/>
            <person name="Lin X."/>
            <person name="Liu S.X."/>
            <person name="Liu Z.A."/>
            <person name="Luros J.S."/>
            <person name="Maiti R."/>
            <person name="Marziali A."/>
            <person name="Militscher J."/>
            <person name="Miranda M."/>
            <person name="Nguyen M."/>
            <person name="Nierman W.C."/>
            <person name="Osborne B.I."/>
            <person name="Pai G."/>
            <person name="Peterson J."/>
            <person name="Pham P.K."/>
            <person name="Rizzo M."/>
            <person name="Rooney T."/>
            <person name="Rowley D."/>
            <person name="Sakano H."/>
            <person name="Salzberg S.L."/>
            <person name="Schwartz J.R."/>
            <person name="Shinn P."/>
            <person name="Southwick A.M."/>
            <person name="Sun H."/>
            <person name="Tallon L.J."/>
            <person name="Tambunga G."/>
            <person name="Toriumi M.J."/>
            <person name="Town C.D."/>
            <person name="Utterback T."/>
            <person name="Van Aken S."/>
            <person name="Vaysberg M."/>
            <person name="Vysotskaia V.S."/>
            <person name="Walker M."/>
            <person name="Wu D."/>
            <person name="Yu G."/>
            <person name="Fraser C.M."/>
            <person name="Venter J.C."/>
            <person name="Davis R.W."/>
        </authorList>
    </citation>
    <scope>NUCLEOTIDE SEQUENCE [LARGE SCALE GENOMIC DNA]</scope>
    <source>
        <strain>cv. Columbia</strain>
    </source>
</reference>
<reference key="2">
    <citation type="journal article" date="2017" name="Plant J.">
        <title>Araport11: a complete reannotation of the Arabidopsis thaliana reference genome.</title>
        <authorList>
            <person name="Cheng C.Y."/>
            <person name="Krishnakumar V."/>
            <person name="Chan A.P."/>
            <person name="Thibaud-Nissen F."/>
            <person name="Schobel S."/>
            <person name="Town C.D."/>
        </authorList>
    </citation>
    <scope>GENOME REANNOTATION</scope>
    <source>
        <strain>cv. Columbia</strain>
    </source>
</reference>
<reference key="3">
    <citation type="journal article" date="2008" name="Trends Plant Sci.">
        <title>The plant B3 superfamily.</title>
        <authorList>
            <person name="Swaminathan K."/>
            <person name="Peterson K."/>
            <person name="Jack T."/>
        </authorList>
    </citation>
    <scope>GENE FAMILY</scope>
</reference>
<comment type="subcellular location">
    <subcellularLocation>
        <location evidence="1">Nucleus</location>
    </subcellularLocation>
</comment>
<feature type="chain" id="PRO_0000412846" description="Putative B3 domain-containing protein At1g78640">
    <location>
        <begin position="1"/>
        <end position="487"/>
    </location>
</feature>
<feature type="DNA-binding region" description="TF-B3 1">
    <location>
        <begin position="171"/>
        <end position="269"/>
    </location>
</feature>
<feature type="DNA-binding region" description="TF-B3 2">
    <location>
        <begin position="379"/>
        <end position="474"/>
    </location>
</feature>
<organism>
    <name type="scientific">Arabidopsis thaliana</name>
    <name type="common">Mouse-ear cress</name>
    <dbReference type="NCBI Taxonomy" id="3702"/>
    <lineage>
        <taxon>Eukaryota</taxon>
        <taxon>Viridiplantae</taxon>
        <taxon>Streptophyta</taxon>
        <taxon>Embryophyta</taxon>
        <taxon>Tracheophyta</taxon>
        <taxon>Spermatophyta</taxon>
        <taxon>Magnoliopsida</taxon>
        <taxon>eudicotyledons</taxon>
        <taxon>Gunneridae</taxon>
        <taxon>Pentapetalae</taxon>
        <taxon>rosids</taxon>
        <taxon>malvids</taxon>
        <taxon>Brassicales</taxon>
        <taxon>Brassicaceae</taxon>
        <taxon>Camelineae</taxon>
        <taxon>Arabidopsis</taxon>
    </lineage>
</organism>
<sequence length="487" mass="55276">MAEEQREISHENNVSLGSAETAIPLTNVSISPTKKEEQKTVYLVLFGRTIYVESSSLESEETVMPIVDVPKSPAKEDLTTHCSLDAESSEKGFPVDPYMGILGNNPNINSNVTCAGNKDLTEDIIKFKKMRSLSKEKIVEEKGTRVLTELPPYTWTIKKTLKESDINHQCRLLLNTTDAENHIMRHLPTDDQKKIQEGIGVDVKAYDHDTYTEHDMVFKRHVKTSKSYVFNGGWAKAFVGRRELKEGDKIGLFWAKKSQTFMSQEQQGTSPLNTDEALKSHHSFSQNPNYIESNLSRRYQTNFSLGSQRISGQFLMIPNPGFVDTSSMTNTHDTSLANFQTVPTTTNPKIILKEEKENEEEQQYWTIKKELTKSDACQRLTLSKSSVEEHILKHLLPEDSQKIDKGKPGITVKVYDNDTDTEHELCLAFQCSYVLKNGWVKTFVKRRGLEEGDMIGLFWECSTSKLHFSVLFRVNAKAPAAEEKEAY</sequence>
<protein>
    <recommendedName>
        <fullName>Putative B3 domain-containing protein At1g78640</fullName>
    </recommendedName>
</protein>
<keyword id="KW-0238">DNA-binding</keyword>
<keyword id="KW-0539">Nucleus</keyword>
<keyword id="KW-1185">Reference proteome</keyword>
<keyword id="KW-0677">Repeat</keyword>
<keyword id="KW-0804">Transcription</keyword>
<keyword id="KW-0805">Transcription regulation</keyword>
<name>Y1786_ARATH</name>
<accession>Q9SYL8</accession>